<sequence length="444" mass="49710">MSASTMTPGEIVSELDKYIIGQNRAKRAVAVALRNRWRRQQVEEPLRHEIHPKNILMIGPTGVGKTEIARRLAKLANAPFIKIEATKFTEVGYVGRDVDTIIRDLTEYSIKQTRELEMRRVRTQAEDAAEDRILDALVPPSRGTSGEPERGEDSNARQTFRKRLREGKCDDLEIEIEIAQPVPQMDVMTPPGMEEMAEQLRGMFAGLARDKKKPKKMKVKEAFKLIVEEEAAKRINEDDLRTAAIANVEQNGIVFLDEIDKIAARQESGGADVSRQGVQRDLLPLVEGTTVNTRYGMVRTDHILFIASGAFHLSRPSDLIPELQGRFPIRVELESLTAQDFVRILSDTDASLIKQYSALLGTEDVQLDFKPDGIERLAELAFSVNERTENIGARRLYTVMEKLLEELSFDATASSGKTITIDAAYVDAQLSEAASSQDLARYVL</sequence>
<protein>
    <recommendedName>
        <fullName evidence="1">ATP-dependent protease ATPase subunit HslU</fullName>
    </recommendedName>
    <alternativeName>
        <fullName evidence="1">Unfoldase HslU</fullName>
    </alternativeName>
</protein>
<keyword id="KW-0067">ATP-binding</keyword>
<keyword id="KW-0143">Chaperone</keyword>
<keyword id="KW-0963">Cytoplasm</keyword>
<keyword id="KW-0547">Nucleotide-binding</keyword>
<dbReference type="EMBL" id="AM902716">
    <property type="protein sequence ID" value="CAP45149.1"/>
    <property type="molecule type" value="Genomic_DNA"/>
</dbReference>
<dbReference type="SMR" id="A9IH53"/>
<dbReference type="STRING" id="94624.Bpet4797"/>
<dbReference type="KEGG" id="bpt:Bpet4797"/>
<dbReference type="eggNOG" id="COG1220">
    <property type="taxonomic scope" value="Bacteria"/>
</dbReference>
<dbReference type="Proteomes" id="UP000001225">
    <property type="component" value="Chromosome"/>
</dbReference>
<dbReference type="GO" id="GO:0009376">
    <property type="term" value="C:HslUV protease complex"/>
    <property type="evidence" value="ECO:0007669"/>
    <property type="project" value="UniProtKB-UniRule"/>
</dbReference>
<dbReference type="GO" id="GO:0005524">
    <property type="term" value="F:ATP binding"/>
    <property type="evidence" value="ECO:0007669"/>
    <property type="project" value="UniProtKB-UniRule"/>
</dbReference>
<dbReference type="GO" id="GO:0016887">
    <property type="term" value="F:ATP hydrolysis activity"/>
    <property type="evidence" value="ECO:0007669"/>
    <property type="project" value="InterPro"/>
</dbReference>
<dbReference type="GO" id="GO:0008233">
    <property type="term" value="F:peptidase activity"/>
    <property type="evidence" value="ECO:0007669"/>
    <property type="project" value="InterPro"/>
</dbReference>
<dbReference type="GO" id="GO:0036402">
    <property type="term" value="F:proteasome-activating activity"/>
    <property type="evidence" value="ECO:0007669"/>
    <property type="project" value="UniProtKB-UniRule"/>
</dbReference>
<dbReference type="GO" id="GO:0043335">
    <property type="term" value="P:protein unfolding"/>
    <property type="evidence" value="ECO:0007669"/>
    <property type="project" value="UniProtKB-UniRule"/>
</dbReference>
<dbReference type="GO" id="GO:0051603">
    <property type="term" value="P:proteolysis involved in protein catabolic process"/>
    <property type="evidence" value="ECO:0007669"/>
    <property type="project" value="TreeGrafter"/>
</dbReference>
<dbReference type="CDD" id="cd19498">
    <property type="entry name" value="RecA-like_HslU"/>
    <property type="match status" value="1"/>
</dbReference>
<dbReference type="FunFam" id="3.40.50.300:FF:000213">
    <property type="entry name" value="ATP-dependent protease ATPase subunit HslU"/>
    <property type="match status" value="1"/>
</dbReference>
<dbReference type="FunFam" id="3.40.50.300:FF:000220">
    <property type="entry name" value="ATP-dependent protease ATPase subunit HslU"/>
    <property type="match status" value="1"/>
</dbReference>
<dbReference type="Gene3D" id="1.10.8.60">
    <property type="match status" value="1"/>
</dbReference>
<dbReference type="Gene3D" id="1.10.8.10">
    <property type="entry name" value="DNA helicase RuvA subunit, C-terminal domain"/>
    <property type="match status" value="1"/>
</dbReference>
<dbReference type="Gene3D" id="3.40.50.300">
    <property type="entry name" value="P-loop containing nucleotide triphosphate hydrolases"/>
    <property type="match status" value="2"/>
</dbReference>
<dbReference type="HAMAP" id="MF_00249">
    <property type="entry name" value="HslU"/>
    <property type="match status" value="1"/>
</dbReference>
<dbReference type="InterPro" id="IPR003593">
    <property type="entry name" value="AAA+_ATPase"/>
</dbReference>
<dbReference type="InterPro" id="IPR050052">
    <property type="entry name" value="ATP-dep_Clp_protease_ClpX"/>
</dbReference>
<dbReference type="InterPro" id="IPR003959">
    <property type="entry name" value="ATPase_AAA_core"/>
</dbReference>
<dbReference type="InterPro" id="IPR019489">
    <property type="entry name" value="Clp_ATPase_C"/>
</dbReference>
<dbReference type="InterPro" id="IPR004491">
    <property type="entry name" value="HslU"/>
</dbReference>
<dbReference type="InterPro" id="IPR027417">
    <property type="entry name" value="P-loop_NTPase"/>
</dbReference>
<dbReference type="NCBIfam" id="TIGR00390">
    <property type="entry name" value="hslU"/>
    <property type="match status" value="1"/>
</dbReference>
<dbReference type="NCBIfam" id="NF003544">
    <property type="entry name" value="PRK05201.1"/>
    <property type="match status" value="1"/>
</dbReference>
<dbReference type="PANTHER" id="PTHR48102">
    <property type="entry name" value="ATP-DEPENDENT CLP PROTEASE ATP-BINDING SUBUNIT CLPX-LIKE, MITOCHONDRIAL-RELATED"/>
    <property type="match status" value="1"/>
</dbReference>
<dbReference type="PANTHER" id="PTHR48102:SF3">
    <property type="entry name" value="ATP-DEPENDENT PROTEASE ATPASE SUBUNIT HSLU"/>
    <property type="match status" value="1"/>
</dbReference>
<dbReference type="Pfam" id="PF00004">
    <property type="entry name" value="AAA"/>
    <property type="match status" value="1"/>
</dbReference>
<dbReference type="Pfam" id="PF07724">
    <property type="entry name" value="AAA_2"/>
    <property type="match status" value="1"/>
</dbReference>
<dbReference type="SMART" id="SM00382">
    <property type="entry name" value="AAA"/>
    <property type="match status" value="1"/>
</dbReference>
<dbReference type="SMART" id="SM01086">
    <property type="entry name" value="ClpB_D2-small"/>
    <property type="match status" value="1"/>
</dbReference>
<dbReference type="SUPFAM" id="SSF52540">
    <property type="entry name" value="P-loop containing nucleoside triphosphate hydrolases"/>
    <property type="match status" value="1"/>
</dbReference>
<reference key="1">
    <citation type="journal article" date="2008" name="BMC Genomics">
        <title>The missing link: Bordetella petrii is endowed with both the metabolic versatility of environmental bacteria and virulence traits of pathogenic Bordetellae.</title>
        <authorList>
            <person name="Gross R."/>
            <person name="Guzman C.A."/>
            <person name="Sebaihia M."/>
            <person name="Martin dos Santos V.A.P."/>
            <person name="Pieper D.H."/>
            <person name="Koebnik R."/>
            <person name="Lechner M."/>
            <person name="Bartels D."/>
            <person name="Buhrmester J."/>
            <person name="Choudhuri J.V."/>
            <person name="Ebensen T."/>
            <person name="Gaigalat L."/>
            <person name="Herrmann S."/>
            <person name="Khachane A.N."/>
            <person name="Larisch C."/>
            <person name="Link S."/>
            <person name="Linke B."/>
            <person name="Meyer F."/>
            <person name="Mormann S."/>
            <person name="Nakunst D."/>
            <person name="Rueckert C."/>
            <person name="Schneiker-Bekel S."/>
            <person name="Schulze K."/>
            <person name="Voerholter F.-J."/>
            <person name="Yevsa T."/>
            <person name="Engle J.T."/>
            <person name="Goldman W.E."/>
            <person name="Puehler A."/>
            <person name="Goebel U.B."/>
            <person name="Goesmann A."/>
            <person name="Bloecker H."/>
            <person name="Kaiser O."/>
            <person name="Martinez-Arias R."/>
        </authorList>
    </citation>
    <scope>NUCLEOTIDE SEQUENCE [LARGE SCALE GENOMIC DNA]</scope>
    <source>
        <strain>ATCC BAA-461 / DSM 12804 / CCUG 43448</strain>
    </source>
</reference>
<organism>
    <name type="scientific">Bordetella petrii (strain ATCC BAA-461 / DSM 12804 / CCUG 43448)</name>
    <dbReference type="NCBI Taxonomy" id="340100"/>
    <lineage>
        <taxon>Bacteria</taxon>
        <taxon>Pseudomonadati</taxon>
        <taxon>Pseudomonadota</taxon>
        <taxon>Betaproteobacteria</taxon>
        <taxon>Burkholderiales</taxon>
        <taxon>Alcaligenaceae</taxon>
        <taxon>Bordetella</taxon>
    </lineage>
</organism>
<evidence type="ECO:0000255" key="1">
    <source>
        <dbReference type="HAMAP-Rule" id="MF_00249"/>
    </source>
</evidence>
<evidence type="ECO:0000256" key="2">
    <source>
        <dbReference type="SAM" id="MobiDB-lite"/>
    </source>
</evidence>
<accession>A9IH53</accession>
<name>HSLU_BORPD</name>
<feature type="chain" id="PRO_1000100936" description="ATP-dependent protease ATPase subunit HslU">
    <location>
        <begin position="1"/>
        <end position="444"/>
    </location>
</feature>
<feature type="region of interest" description="Disordered" evidence="2">
    <location>
        <begin position="137"/>
        <end position="162"/>
    </location>
</feature>
<feature type="binding site" evidence="1">
    <location>
        <position position="20"/>
    </location>
    <ligand>
        <name>ATP</name>
        <dbReference type="ChEBI" id="CHEBI:30616"/>
    </ligand>
</feature>
<feature type="binding site" evidence="1">
    <location>
        <begin position="62"/>
        <end position="67"/>
    </location>
    <ligand>
        <name>ATP</name>
        <dbReference type="ChEBI" id="CHEBI:30616"/>
    </ligand>
</feature>
<feature type="binding site" evidence="1">
    <location>
        <position position="257"/>
    </location>
    <ligand>
        <name>ATP</name>
        <dbReference type="ChEBI" id="CHEBI:30616"/>
    </ligand>
</feature>
<feature type="binding site" evidence="1">
    <location>
        <position position="322"/>
    </location>
    <ligand>
        <name>ATP</name>
        <dbReference type="ChEBI" id="CHEBI:30616"/>
    </ligand>
</feature>
<feature type="binding site" evidence="1">
    <location>
        <position position="394"/>
    </location>
    <ligand>
        <name>ATP</name>
        <dbReference type="ChEBI" id="CHEBI:30616"/>
    </ligand>
</feature>
<comment type="function">
    <text evidence="1">ATPase subunit of a proteasome-like degradation complex; this subunit has chaperone activity. The binding of ATP and its subsequent hydrolysis by HslU are essential for unfolding of protein substrates subsequently hydrolyzed by HslV. HslU recognizes the N-terminal part of its protein substrates and unfolds these before they are guided to HslV for hydrolysis.</text>
</comment>
<comment type="subunit">
    <text evidence="1">A double ring-shaped homohexamer of HslV is capped on each side by a ring-shaped HslU homohexamer. The assembly of the HslU/HslV complex is dependent on binding of ATP.</text>
</comment>
<comment type="subcellular location">
    <subcellularLocation>
        <location evidence="1">Cytoplasm</location>
    </subcellularLocation>
</comment>
<comment type="similarity">
    <text evidence="1">Belongs to the ClpX chaperone family. HslU subfamily.</text>
</comment>
<proteinExistence type="inferred from homology"/>
<gene>
    <name evidence="1" type="primary">hslU</name>
    <name type="ordered locus">Bpet4797</name>
</gene>